<comment type="function">
    <text evidence="6 7">Cyclic nucleotide phosphodiesterase with a dual specificity for the second messengers cAMP and cGMP, which are key regulators of many important physiological processes (PubMed:15673286). Required for male fertility and male mating behavior (PubMed:20551439).</text>
</comment>
<comment type="catalytic activity">
    <reaction evidence="6">
        <text>a nucleoside 3',5'-cyclic phosphate + H2O = a nucleoside 5'-phosphate + H(+)</text>
        <dbReference type="Rhea" id="RHEA:14653"/>
        <dbReference type="ChEBI" id="CHEBI:15377"/>
        <dbReference type="ChEBI" id="CHEBI:15378"/>
        <dbReference type="ChEBI" id="CHEBI:57867"/>
        <dbReference type="ChEBI" id="CHEBI:58464"/>
        <dbReference type="EC" id="3.1.4.17"/>
    </reaction>
    <physiologicalReaction direction="left-to-right" evidence="10">
        <dbReference type="Rhea" id="RHEA:14654"/>
    </physiologicalReaction>
</comment>
<comment type="catalytic activity">
    <reaction evidence="6">
        <text>3',5'-cyclic GMP + H2O = GMP + H(+)</text>
        <dbReference type="Rhea" id="RHEA:16957"/>
        <dbReference type="ChEBI" id="CHEBI:15377"/>
        <dbReference type="ChEBI" id="CHEBI:15378"/>
        <dbReference type="ChEBI" id="CHEBI:57746"/>
        <dbReference type="ChEBI" id="CHEBI:58115"/>
    </reaction>
    <physiologicalReaction direction="left-to-right" evidence="10">
        <dbReference type="Rhea" id="RHEA:16958"/>
    </physiologicalReaction>
</comment>
<comment type="catalytic activity">
    <reaction evidence="6">
        <text>3',5'-cyclic AMP + H2O = AMP + H(+)</text>
        <dbReference type="Rhea" id="RHEA:25277"/>
        <dbReference type="ChEBI" id="CHEBI:15377"/>
        <dbReference type="ChEBI" id="CHEBI:15378"/>
        <dbReference type="ChEBI" id="CHEBI:58165"/>
        <dbReference type="ChEBI" id="CHEBI:456215"/>
    </reaction>
    <physiologicalReaction direction="left-to-right" evidence="10">
        <dbReference type="Rhea" id="RHEA:25278"/>
    </physiologicalReaction>
</comment>
<comment type="cofactor">
    <cofactor evidence="3">
        <name>Zn(2+)</name>
        <dbReference type="ChEBI" id="CHEBI:29105"/>
    </cofactor>
    <text evidence="3">Binds 2 divalent metal cations per subunit. Site 1 may preferentially bind zinc ions.</text>
</comment>
<comment type="cofactor">
    <cofactor evidence="3">
        <name>Mg(2+)</name>
        <dbReference type="ChEBI" id="CHEBI:18420"/>
    </cofactor>
    <text evidence="3">Binds 2 divalent metal cations per subunit. Site 2 has a preference for magnesium ions.</text>
</comment>
<comment type="activity regulation">
    <text evidence="6">Type I PDE are activated by the binding of calmodulin in the presence of Ca(2+) (PubMed:15673286). Inhibited by zaprinast and sildenafil (PubMed:15673286).</text>
</comment>
<comment type="biophysicochemical properties">
    <kinetics>
        <KM evidence="6">15.3 uM for 3',5'-cyclic GMP</KM>
        <KM evidence="6">20.5 uM for 3',5'-cyclic AMP</KM>
    </kinetics>
</comment>
<comment type="alternative products">
    <event type="alternative splicing"/>
    <isoform>
        <id>B7YZV4-1</id>
        <name evidence="12">B</name>
        <name evidence="12">G</name>
        <sequence type="displayed"/>
    </isoform>
    <isoform>
        <id>B7YZV4-2</id>
        <name evidence="12">C</name>
        <sequence type="described" ref="VSP_058752"/>
    </isoform>
</comment>
<comment type="tissue specificity">
    <text evidence="6 7">Expressed in the head (at protein level) (PubMed:15673286). Expressed in Malpighian tubules (PubMed:15673286). Expressed in neurons in the brain and ventral ganglia with male flies having higher levels of expression in the abdominal ganglia compared to female flies (PubMed:20551439).</text>
</comment>
<comment type="similarity">
    <text evidence="9">Belongs to the cyclic nucleotide phosphodiesterase family. PDE1 subfamily.</text>
</comment>
<evidence type="ECO:0000250" key="1">
    <source>
        <dbReference type="UniProtKB" id="O76083"/>
    </source>
</evidence>
<evidence type="ECO:0000250" key="2">
    <source>
        <dbReference type="UniProtKB" id="P14100"/>
    </source>
</evidence>
<evidence type="ECO:0000250" key="3">
    <source>
        <dbReference type="UniProtKB" id="Q01064"/>
    </source>
</evidence>
<evidence type="ECO:0000255" key="4">
    <source>
        <dbReference type="PROSITE-ProRule" id="PRU01192"/>
    </source>
</evidence>
<evidence type="ECO:0000256" key="5">
    <source>
        <dbReference type="SAM" id="MobiDB-lite"/>
    </source>
</evidence>
<evidence type="ECO:0000269" key="6">
    <source>
    </source>
</evidence>
<evidence type="ECO:0000269" key="7">
    <source>
    </source>
</evidence>
<evidence type="ECO:0000303" key="8">
    <source>
    </source>
</evidence>
<evidence type="ECO:0000305" key="9"/>
<evidence type="ECO:0000305" key="10">
    <source>
    </source>
</evidence>
<evidence type="ECO:0000312" key="11">
    <source>
        <dbReference type="EMBL" id="AAM48425.1"/>
    </source>
</evidence>
<evidence type="ECO:0000312" key="12">
    <source>
        <dbReference type="FlyBase" id="FBgn0264815"/>
    </source>
</evidence>
<evidence type="ECO:0000312" key="13">
    <source>
        <dbReference type="Proteomes" id="UP000000803"/>
    </source>
</evidence>
<gene>
    <name evidence="12" type="primary">Pde1c</name>
    <name evidence="12" type="ORF">CG44007</name>
</gene>
<sequence>MQPSSPNATNYLADNIQISSANLSQTEMVVGRDSADYTAMHSINVGVGNSFLRGDTDIPQESGHSFETPSNMSFTAGQWDTESLPPVDTPDALNKAAGRIRSLLRRMDHETVAYEDMQRNLHYAARVLEAVFIDESREGCNGNCKNLNCSRHSHGRDDQQQDNNNSNRSCSLQEASPGGAGAGVTPGADNQDSIESRTKGVSQAPQTHSGPTGPPSNTSSETIAQPAPKLQPALETVRESVMEESPSKDPGDKGPPPPASTSTLTSQTTTSSSATAEPSAKAAESQAGSAGSSGSCSNPAAVHRQRRLRTPTWARSMSTNKTRLADEDDELSEVQPDAVPPEVREWLASTFTRQMATSRRKSDEKPKFRSVAHAIRAGIFVDRMYRRVSSSALTAFPPDVVRLLKNLDDWTFDVFALTEAASGQVVKYVAYELFNRYGSIHKFKIAPGILEAFLHRVEEGYCRYRNPYHNNLHAVDVMQTIHYCLCNTGLMNWLTDLEIFASLLAALLHDYEHTGTTNNFHVMSGSETALLYNDRAVLENHHASASFRLLREDEYNILSHLSREEFRELRGLVIEMVLGTDMTNHFQQMKAMRQLLTLQEATIDKQKVLSLVLHCCDISHPAKQWGVHHRWTMLLLEEFFRQGDLEKELGLPFSPLCDRNNTLVAESQICFIDFIVEPSMGVMSDMLELILAPIAPMNKSKPATLVEHETTANSTTNSAIVIPNSGITPSMDKPRDHRTEAKTTAAECLARKSVTGTTASKFNIPKPWLTCLVENKRIWKEQAVKDAEARALATAAEEAAAAAAAEAEESKPETETADGEQSEPAAEPADGAAA</sequence>
<name>PDE1_DROME</name>
<organism evidence="13">
    <name type="scientific">Drosophila melanogaster</name>
    <name type="common">Fruit fly</name>
    <dbReference type="NCBI Taxonomy" id="7227"/>
    <lineage>
        <taxon>Eukaryota</taxon>
        <taxon>Metazoa</taxon>
        <taxon>Ecdysozoa</taxon>
        <taxon>Arthropoda</taxon>
        <taxon>Hexapoda</taxon>
        <taxon>Insecta</taxon>
        <taxon>Pterygota</taxon>
        <taxon>Neoptera</taxon>
        <taxon>Endopterygota</taxon>
        <taxon>Diptera</taxon>
        <taxon>Brachycera</taxon>
        <taxon>Muscomorpha</taxon>
        <taxon>Ephydroidea</taxon>
        <taxon>Drosophilidae</taxon>
        <taxon>Drosophila</taxon>
        <taxon>Sophophora</taxon>
    </lineage>
</organism>
<protein>
    <recommendedName>
        <fullName evidence="10">Dual specificity calcium/calmodulin-dependent 3',5'-cyclic nucleotide phosphodiesterase 1</fullName>
        <shortName evidence="8">PDE1</shortName>
        <ecNumber evidence="6">3.1.4.17</ecNumber>
    </recommendedName>
</protein>
<reference evidence="13" key="1">
    <citation type="journal article" date="2000" name="Science">
        <title>The genome sequence of Drosophila melanogaster.</title>
        <authorList>
            <person name="Adams M.D."/>
            <person name="Celniker S.E."/>
            <person name="Holt R.A."/>
            <person name="Evans C.A."/>
            <person name="Gocayne J.D."/>
            <person name="Amanatides P.G."/>
            <person name="Scherer S.E."/>
            <person name="Li P.W."/>
            <person name="Hoskins R.A."/>
            <person name="Galle R.F."/>
            <person name="George R.A."/>
            <person name="Lewis S.E."/>
            <person name="Richards S."/>
            <person name="Ashburner M."/>
            <person name="Henderson S.N."/>
            <person name="Sutton G.G."/>
            <person name="Wortman J.R."/>
            <person name="Yandell M.D."/>
            <person name="Zhang Q."/>
            <person name="Chen L.X."/>
            <person name="Brandon R.C."/>
            <person name="Rogers Y.-H.C."/>
            <person name="Blazej R.G."/>
            <person name="Champe M."/>
            <person name="Pfeiffer B.D."/>
            <person name="Wan K.H."/>
            <person name="Doyle C."/>
            <person name="Baxter E.G."/>
            <person name="Helt G."/>
            <person name="Nelson C.R."/>
            <person name="Miklos G.L.G."/>
            <person name="Abril J.F."/>
            <person name="Agbayani A."/>
            <person name="An H.-J."/>
            <person name="Andrews-Pfannkoch C."/>
            <person name="Baldwin D."/>
            <person name="Ballew R.M."/>
            <person name="Basu A."/>
            <person name="Baxendale J."/>
            <person name="Bayraktaroglu L."/>
            <person name="Beasley E.M."/>
            <person name="Beeson K.Y."/>
            <person name="Benos P.V."/>
            <person name="Berman B.P."/>
            <person name="Bhandari D."/>
            <person name="Bolshakov S."/>
            <person name="Borkova D."/>
            <person name="Botchan M.R."/>
            <person name="Bouck J."/>
            <person name="Brokstein P."/>
            <person name="Brottier P."/>
            <person name="Burtis K.C."/>
            <person name="Busam D.A."/>
            <person name="Butler H."/>
            <person name="Cadieu E."/>
            <person name="Center A."/>
            <person name="Chandra I."/>
            <person name="Cherry J.M."/>
            <person name="Cawley S."/>
            <person name="Dahlke C."/>
            <person name="Davenport L.B."/>
            <person name="Davies P."/>
            <person name="de Pablos B."/>
            <person name="Delcher A."/>
            <person name="Deng Z."/>
            <person name="Mays A.D."/>
            <person name="Dew I."/>
            <person name="Dietz S.M."/>
            <person name="Dodson K."/>
            <person name="Doup L.E."/>
            <person name="Downes M."/>
            <person name="Dugan-Rocha S."/>
            <person name="Dunkov B.C."/>
            <person name="Dunn P."/>
            <person name="Durbin K.J."/>
            <person name="Evangelista C.C."/>
            <person name="Ferraz C."/>
            <person name="Ferriera S."/>
            <person name="Fleischmann W."/>
            <person name="Fosler C."/>
            <person name="Gabrielian A.E."/>
            <person name="Garg N.S."/>
            <person name="Gelbart W.M."/>
            <person name="Glasser K."/>
            <person name="Glodek A."/>
            <person name="Gong F."/>
            <person name="Gorrell J.H."/>
            <person name="Gu Z."/>
            <person name="Guan P."/>
            <person name="Harris M."/>
            <person name="Harris N.L."/>
            <person name="Harvey D.A."/>
            <person name="Heiman T.J."/>
            <person name="Hernandez J.R."/>
            <person name="Houck J."/>
            <person name="Hostin D."/>
            <person name="Houston K.A."/>
            <person name="Howland T.J."/>
            <person name="Wei M.-H."/>
            <person name="Ibegwam C."/>
            <person name="Jalali M."/>
            <person name="Kalush F."/>
            <person name="Karpen G.H."/>
            <person name="Ke Z."/>
            <person name="Kennison J.A."/>
            <person name="Ketchum K.A."/>
            <person name="Kimmel B.E."/>
            <person name="Kodira C.D."/>
            <person name="Kraft C.L."/>
            <person name="Kravitz S."/>
            <person name="Kulp D."/>
            <person name="Lai Z."/>
            <person name="Lasko P."/>
            <person name="Lei Y."/>
            <person name="Levitsky A.A."/>
            <person name="Li J.H."/>
            <person name="Li Z."/>
            <person name="Liang Y."/>
            <person name="Lin X."/>
            <person name="Liu X."/>
            <person name="Mattei B."/>
            <person name="McIntosh T.C."/>
            <person name="McLeod M.P."/>
            <person name="McPherson D."/>
            <person name="Merkulov G."/>
            <person name="Milshina N.V."/>
            <person name="Mobarry C."/>
            <person name="Morris J."/>
            <person name="Moshrefi A."/>
            <person name="Mount S.M."/>
            <person name="Moy M."/>
            <person name="Murphy B."/>
            <person name="Murphy L."/>
            <person name="Muzny D.M."/>
            <person name="Nelson D.L."/>
            <person name="Nelson D.R."/>
            <person name="Nelson K.A."/>
            <person name="Nixon K."/>
            <person name="Nusskern D.R."/>
            <person name="Pacleb J.M."/>
            <person name="Palazzolo M."/>
            <person name="Pittman G.S."/>
            <person name="Pan S."/>
            <person name="Pollard J."/>
            <person name="Puri V."/>
            <person name="Reese M.G."/>
            <person name="Reinert K."/>
            <person name="Remington K."/>
            <person name="Saunders R.D.C."/>
            <person name="Scheeler F."/>
            <person name="Shen H."/>
            <person name="Shue B.C."/>
            <person name="Siden-Kiamos I."/>
            <person name="Simpson M."/>
            <person name="Skupski M.P."/>
            <person name="Smith T.J."/>
            <person name="Spier E."/>
            <person name="Spradling A.C."/>
            <person name="Stapleton M."/>
            <person name="Strong R."/>
            <person name="Sun E."/>
            <person name="Svirskas R."/>
            <person name="Tector C."/>
            <person name="Turner R."/>
            <person name="Venter E."/>
            <person name="Wang A.H."/>
            <person name="Wang X."/>
            <person name="Wang Z.-Y."/>
            <person name="Wassarman D.A."/>
            <person name="Weinstock G.M."/>
            <person name="Weissenbach J."/>
            <person name="Williams S.M."/>
            <person name="Woodage T."/>
            <person name="Worley K.C."/>
            <person name="Wu D."/>
            <person name="Yang S."/>
            <person name="Yao Q.A."/>
            <person name="Ye J."/>
            <person name="Yeh R.-F."/>
            <person name="Zaveri J.S."/>
            <person name="Zhan M."/>
            <person name="Zhang G."/>
            <person name="Zhao Q."/>
            <person name="Zheng L."/>
            <person name="Zheng X.H."/>
            <person name="Zhong F.N."/>
            <person name="Zhong W."/>
            <person name="Zhou X."/>
            <person name="Zhu S.C."/>
            <person name="Zhu X."/>
            <person name="Smith H.O."/>
            <person name="Gibbs R.A."/>
            <person name="Myers E.W."/>
            <person name="Rubin G.M."/>
            <person name="Venter J.C."/>
        </authorList>
    </citation>
    <scope>NUCLEOTIDE SEQUENCE [LARGE SCALE GENOMIC DNA]</scope>
    <source>
        <strain evidence="13">Berkeley</strain>
    </source>
</reference>
<reference evidence="13" key="2">
    <citation type="journal article" date="2002" name="Genome Biol.">
        <title>Annotation of the Drosophila melanogaster euchromatic genome: a systematic review.</title>
        <authorList>
            <person name="Misra S."/>
            <person name="Crosby M.A."/>
            <person name="Mungall C.J."/>
            <person name="Matthews B.B."/>
            <person name="Campbell K.S."/>
            <person name="Hradecky P."/>
            <person name="Huang Y."/>
            <person name="Kaminker J.S."/>
            <person name="Millburn G.H."/>
            <person name="Prochnik S.E."/>
            <person name="Smith C.D."/>
            <person name="Tupy J.L."/>
            <person name="Whitfield E.J."/>
            <person name="Bayraktaroglu L."/>
            <person name="Berman B.P."/>
            <person name="Bettencourt B.R."/>
            <person name="Celniker S.E."/>
            <person name="de Grey A.D.N.J."/>
            <person name="Drysdale R.A."/>
            <person name="Harris N.L."/>
            <person name="Richter J."/>
            <person name="Russo S."/>
            <person name="Schroeder A.J."/>
            <person name="Shu S.Q."/>
            <person name="Stapleton M."/>
            <person name="Yamada C."/>
            <person name="Ashburner M."/>
            <person name="Gelbart W.M."/>
            <person name="Rubin G.M."/>
            <person name="Lewis S.E."/>
        </authorList>
    </citation>
    <scope>GENOME REANNOTATION</scope>
    <source>
        <strain evidence="13">Berkeley</strain>
    </source>
</reference>
<reference evidence="11" key="3">
    <citation type="journal article" date="2002" name="Genome Biol.">
        <title>A Drosophila full-length cDNA resource.</title>
        <authorList>
            <person name="Stapleton M."/>
            <person name="Carlson J.W."/>
            <person name="Brokstein P."/>
            <person name="Yu C."/>
            <person name="Champe M."/>
            <person name="George R.A."/>
            <person name="Guarin H."/>
            <person name="Kronmiller B."/>
            <person name="Pacleb J.M."/>
            <person name="Park S."/>
            <person name="Wan K.H."/>
            <person name="Rubin G.M."/>
            <person name="Celniker S.E."/>
        </authorList>
    </citation>
    <scope>NUCLEOTIDE SEQUENCE [LARGE SCALE MRNA] (ISOFORM C)</scope>
    <source>
        <strain evidence="11">Berkeley</strain>
        <tissue evidence="11">Embryo</tissue>
    </source>
</reference>
<reference evidence="9" key="4">
    <citation type="journal article" date="2005" name="Biochem. J.">
        <title>Cyclic nucleotide phosphodiesterases in Drosophila melanogaster.</title>
        <authorList>
            <person name="Day J.P."/>
            <person name="Dow J.A.T."/>
            <person name="Houslay M.D."/>
            <person name="Davies S.A."/>
        </authorList>
    </citation>
    <scope>FUNCTION</scope>
    <scope>CATALYTIC ACTIVITY</scope>
    <scope>ACTIVITY REGULATION</scope>
    <scope>BIOPHYSICOCHEMICAL PROPERTIES</scope>
    <scope>TISSUE SPECIFICITY</scope>
</reference>
<reference evidence="9" key="5">
    <citation type="journal article" date="2010" name="Genetics">
        <title>Infertility and male mating behavior deficits associated with Pde1c in Drosophila melanogaster.</title>
        <authorList>
            <person name="Morton D.B."/>
            <person name="Clemens-Grisham R."/>
            <person name="Hazelett D.J."/>
            <person name="Vermehren-Schmaedick A."/>
        </authorList>
    </citation>
    <scope>FUNCTION</scope>
    <scope>TISSUE SPECIFICITY</scope>
</reference>
<accession>B7YZV4</accession>
<accession>Q9VKE9</accession>
<proteinExistence type="evidence at protein level"/>
<keyword id="KW-0025">Alternative splicing</keyword>
<keyword id="KW-0085">Behavior</keyword>
<keyword id="KW-0114">cAMP</keyword>
<keyword id="KW-0140">cGMP</keyword>
<keyword id="KW-0378">Hydrolase</keyword>
<keyword id="KW-0460">Magnesium</keyword>
<keyword id="KW-0479">Metal-binding</keyword>
<keyword id="KW-1185">Reference proteome</keyword>
<keyword id="KW-0862">Zinc</keyword>
<dbReference type="EC" id="3.1.4.17" evidence="6"/>
<dbReference type="EMBL" id="AE014134">
    <property type="protein sequence ID" value="AAF53123.1"/>
    <property type="molecule type" value="Genomic_DNA"/>
</dbReference>
<dbReference type="EMBL" id="AE014134">
    <property type="protein sequence ID" value="ACL83022.1"/>
    <property type="molecule type" value="Genomic_DNA"/>
</dbReference>
<dbReference type="EMBL" id="AE014134">
    <property type="protein sequence ID" value="ACL83026.1"/>
    <property type="molecule type" value="Genomic_DNA"/>
</dbReference>
<dbReference type="EMBL" id="AY118396">
    <property type="protein sequence ID" value="AAM48425.1"/>
    <property type="molecule type" value="mRNA"/>
</dbReference>
<dbReference type="RefSeq" id="NP_001137816.1">
    <molecule id="B7YZV4-1"/>
    <property type="nucleotide sequence ID" value="NM_001144344.2"/>
</dbReference>
<dbReference type="RefSeq" id="NP_001137820.1">
    <molecule id="B7YZV4-1"/>
    <property type="nucleotide sequence ID" value="NM_001144348.4"/>
</dbReference>
<dbReference type="RefSeq" id="NP_609520.1">
    <molecule id="B7YZV4-2"/>
    <property type="nucleotide sequence ID" value="NM_135676.6"/>
</dbReference>
<dbReference type="SMR" id="B7YZV4"/>
<dbReference type="FunCoup" id="B7YZV4">
    <property type="interactions" value="172"/>
</dbReference>
<dbReference type="STRING" id="7227.FBpp0306255"/>
<dbReference type="GlyGen" id="B7YZV4">
    <property type="glycosylation" value="1 site"/>
</dbReference>
<dbReference type="PaxDb" id="7227-FBpp0289061"/>
<dbReference type="DNASU" id="34594"/>
<dbReference type="EnsemblMetazoa" id="FBtr0334136">
    <molecule id="B7YZV4-1"/>
    <property type="protein sequence ID" value="FBpp0306253"/>
    <property type="gene ID" value="FBgn0264815"/>
</dbReference>
<dbReference type="EnsemblMetazoa" id="FBtr0334137">
    <molecule id="B7YZV4-2"/>
    <property type="protein sequence ID" value="FBpp0306254"/>
    <property type="gene ID" value="FBgn0264815"/>
</dbReference>
<dbReference type="EnsemblMetazoa" id="FBtr0334140">
    <molecule id="B7YZV4-1"/>
    <property type="protein sequence ID" value="FBpp0306257"/>
    <property type="gene ID" value="FBgn0264815"/>
</dbReference>
<dbReference type="GeneID" id="34594"/>
<dbReference type="KEGG" id="dme:Dmel_CG44007"/>
<dbReference type="AGR" id="FB:FBgn0264815"/>
<dbReference type="CTD" id="5137"/>
<dbReference type="FlyBase" id="FBgn0264815">
    <property type="gene designation" value="Pde1c"/>
</dbReference>
<dbReference type="VEuPathDB" id="VectorBase:FBgn0264815"/>
<dbReference type="eggNOG" id="KOG3688">
    <property type="taxonomic scope" value="Eukaryota"/>
</dbReference>
<dbReference type="HOGENOM" id="CLU_005940_0_1_1"/>
<dbReference type="InParanoid" id="B7YZV4"/>
<dbReference type="OMA" id="SFRLMRD"/>
<dbReference type="OrthoDB" id="189220at2759"/>
<dbReference type="Reactome" id="R-DME-111957">
    <property type="pathway name" value="Cam-PDE 1 activation"/>
</dbReference>
<dbReference type="Reactome" id="R-DME-418457">
    <property type="pathway name" value="cGMP effects"/>
</dbReference>
<dbReference type="Reactome" id="R-DME-418555">
    <property type="pathway name" value="G alpha (s) signalling events"/>
</dbReference>
<dbReference type="BioGRID-ORCS" id="34594">
    <property type="hits" value="0 hits in 3 CRISPR screens"/>
</dbReference>
<dbReference type="ChiTaRS" id="Pde1c">
    <property type="organism name" value="fly"/>
</dbReference>
<dbReference type="GenomeRNAi" id="34594"/>
<dbReference type="PRO" id="PR:B7YZV4"/>
<dbReference type="Proteomes" id="UP000000803">
    <property type="component" value="Chromosome 2L"/>
</dbReference>
<dbReference type="Bgee" id="FBgn0264815">
    <property type="expression patterns" value="Expressed in crystal cell in dorsal vessel heart and 229 other cell types or tissues"/>
</dbReference>
<dbReference type="ExpressionAtlas" id="B7YZV4">
    <property type="expression patterns" value="baseline and differential"/>
</dbReference>
<dbReference type="GO" id="GO:0005615">
    <property type="term" value="C:extracellular space"/>
    <property type="evidence" value="ECO:0007005"/>
    <property type="project" value="FlyBase"/>
</dbReference>
<dbReference type="GO" id="GO:0004115">
    <property type="term" value="F:3',5'-cyclic-AMP phosphodiesterase activity"/>
    <property type="evidence" value="ECO:0000314"/>
    <property type="project" value="FlyBase"/>
</dbReference>
<dbReference type="GO" id="GO:0047555">
    <property type="term" value="F:3',5'-cyclic-GMP phosphodiesterase activity"/>
    <property type="evidence" value="ECO:0000314"/>
    <property type="project" value="FlyBase"/>
</dbReference>
<dbReference type="GO" id="GO:0005516">
    <property type="term" value="F:calmodulin binding"/>
    <property type="evidence" value="ECO:0000255"/>
    <property type="project" value="FlyBase"/>
</dbReference>
<dbReference type="GO" id="GO:0048101">
    <property type="term" value="F:calmodulin-activated 3',5'-cyclic-GMP phosphodiesterase activity"/>
    <property type="evidence" value="ECO:0000314"/>
    <property type="project" value="FlyBase"/>
</dbReference>
<dbReference type="GO" id="GO:0004117">
    <property type="term" value="F:calmodulin-activated dual specificity 3',5'-cyclic-GMP, 3',5'-cyclic-AMP phosphodiesterase activity"/>
    <property type="evidence" value="ECO:0000318"/>
    <property type="project" value="GO_Central"/>
</dbReference>
<dbReference type="GO" id="GO:0046872">
    <property type="term" value="F:metal ion binding"/>
    <property type="evidence" value="ECO:0007669"/>
    <property type="project" value="UniProtKB-KW"/>
</dbReference>
<dbReference type="GO" id="GO:0046058">
    <property type="term" value="P:cAMP metabolic process"/>
    <property type="evidence" value="ECO:0000314"/>
    <property type="project" value="FlyBase"/>
</dbReference>
<dbReference type="GO" id="GO:0019933">
    <property type="term" value="P:cAMP-mediated signaling"/>
    <property type="evidence" value="ECO:0000318"/>
    <property type="project" value="GO_Central"/>
</dbReference>
<dbReference type="GO" id="GO:0046068">
    <property type="term" value="P:cGMP metabolic process"/>
    <property type="evidence" value="ECO:0000314"/>
    <property type="project" value="FlyBase"/>
</dbReference>
<dbReference type="GO" id="GO:0060179">
    <property type="term" value="P:male mating behavior"/>
    <property type="evidence" value="ECO:0000315"/>
    <property type="project" value="FlyBase"/>
</dbReference>
<dbReference type="GO" id="GO:0019953">
    <property type="term" value="P:sexual reproduction"/>
    <property type="evidence" value="ECO:0007007"/>
    <property type="project" value="FlyBase"/>
</dbReference>
<dbReference type="CDD" id="cd00077">
    <property type="entry name" value="HDc"/>
    <property type="match status" value="1"/>
</dbReference>
<dbReference type="FunFam" id="1.10.1300.10:FF:000013">
    <property type="entry name" value="Phosphodiesterase"/>
    <property type="match status" value="1"/>
</dbReference>
<dbReference type="Gene3D" id="1.10.1300.10">
    <property type="entry name" value="3'5'-cyclic nucleotide phosphodiesterase, catalytic domain"/>
    <property type="match status" value="1"/>
</dbReference>
<dbReference type="InterPro" id="IPR003607">
    <property type="entry name" value="HD/PDEase_dom"/>
</dbReference>
<dbReference type="InterPro" id="IPR023088">
    <property type="entry name" value="PDEase"/>
</dbReference>
<dbReference type="InterPro" id="IPR002073">
    <property type="entry name" value="PDEase_catalytic_dom"/>
</dbReference>
<dbReference type="InterPro" id="IPR036971">
    <property type="entry name" value="PDEase_catalytic_dom_sf"/>
</dbReference>
<dbReference type="InterPro" id="IPR023174">
    <property type="entry name" value="PDEase_CS"/>
</dbReference>
<dbReference type="InterPro" id="IPR013706">
    <property type="entry name" value="PDEase_N"/>
</dbReference>
<dbReference type="PANTHER" id="PTHR11347">
    <property type="entry name" value="CYCLIC NUCLEOTIDE PHOSPHODIESTERASE"/>
    <property type="match status" value="1"/>
</dbReference>
<dbReference type="Pfam" id="PF00233">
    <property type="entry name" value="PDEase_I"/>
    <property type="match status" value="1"/>
</dbReference>
<dbReference type="Pfam" id="PF08499">
    <property type="entry name" value="PDEase_I_N"/>
    <property type="match status" value="1"/>
</dbReference>
<dbReference type="PRINTS" id="PR00387">
    <property type="entry name" value="PDIESTERASE1"/>
</dbReference>
<dbReference type="SMART" id="SM00471">
    <property type="entry name" value="HDc"/>
    <property type="match status" value="1"/>
</dbReference>
<dbReference type="SUPFAM" id="SSF109604">
    <property type="entry name" value="HD-domain/PDEase-like"/>
    <property type="match status" value="1"/>
</dbReference>
<dbReference type="PROSITE" id="PS00126">
    <property type="entry name" value="PDEASE_I_1"/>
    <property type="match status" value="1"/>
</dbReference>
<dbReference type="PROSITE" id="PS51845">
    <property type="entry name" value="PDEASE_I_2"/>
    <property type="match status" value="1"/>
</dbReference>
<feature type="chain" id="PRO_0000438861" description="Dual specificity calcium/calmodulin-dependent 3',5'-cyclic nucleotide phosphodiesterase 1">
    <location>
        <begin position="1"/>
        <end position="834"/>
    </location>
</feature>
<feature type="domain" description="PDEase" evidence="4">
    <location>
        <begin position="392"/>
        <end position="786"/>
    </location>
</feature>
<feature type="region of interest" description="Disordered" evidence="5">
    <location>
        <begin position="152"/>
        <end position="338"/>
    </location>
</feature>
<feature type="region of interest" description="Calmodulin-binding" evidence="2">
    <location>
        <begin position="364"/>
        <end position="387"/>
    </location>
</feature>
<feature type="region of interest" description="Disordered" evidence="5">
    <location>
        <begin position="720"/>
        <end position="744"/>
    </location>
</feature>
<feature type="region of interest" description="Disordered" evidence="5">
    <location>
        <begin position="797"/>
        <end position="834"/>
    </location>
</feature>
<feature type="compositionally biased region" description="Low complexity" evidence="5">
    <location>
        <begin position="207"/>
        <end position="222"/>
    </location>
</feature>
<feature type="compositionally biased region" description="Basic and acidic residues" evidence="5">
    <location>
        <begin position="236"/>
        <end position="252"/>
    </location>
</feature>
<feature type="compositionally biased region" description="Low complexity" evidence="5">
    <location>
        <begin position="260"/>
        <end position="301"/>
    </location>
</feature>
<feature type="compositionally biased region" description="Polar residues" evidence="5">
    <location>
        <begin position="313"/>
        <end position="322"/>
    </location>
</feature>
<feature type="compositionally biased region" description="Basic and acidic residues" evidence="5">
    <location>
        <begin position="732"/>
        <end position="741"/>
    </location>
</feature>
<feature type="compositionally biased region" description="Low complexity" evidence="5">
    <location>
        <begin position="823"/>
        <end position="834"/>
    </location>
</feature>
<feature type="active site" description="Proton donor" evidence="1">
    <location>
        <position position="469"/>
    </location>
</feature>
<feature type="binding site" evidence="3">
    <location>
        <position position="473"/>
    </location>
    <ligand>
        <name>Zn(2+)</name>
        <dbReference type="ChEBI" id="CHEBI:29105"/>
    </ligand>
</feature>
<feature type="binding site" evidence="3">
    <location>
        <position position="509"/>
    </location>
    <ligand>
        <name>Zn(2+)</name>
        <dbReference type="ChEBI" id="CHEBI:29105"/>
    </ligand>
</feature>
<feature type="binding site" evidence="3">
    <location>
        <position position="510"/>
    </location>
    <ligand>
        <name>Mg(2+)</name>
        <dbReference type="ChEBI" id="CHEBI:18420"/>
    </ligand>
</feature>
<feature type="binding site" evidence="3">
    <location>
        <position position="510"/>
    </location>
    <ligand>
        <name>Zn(2+)</name>
        <dbReference type="ChEBI" id="CHEBI:29105"/>
    </ligand>
</feature>
<feature type="binding site" evidence="3">
    <location>
        <position position="617"/>
    </location>
    <ligand>
        <name>Zn(2+)</name>
        <dbReference type="ChEBI" id="CHEBI:29105"/>
    </ligand>
</feature>
<feature type="splice variant" id="VSP_058752" description="In isoform C." evidence="9">
    <original>MQPSSPNATNYLADNIQISSANLSQTEMVVGRDSADYTAMHSINVGVGNSFLRGDTDIPQESGHSFETPSNMSFTAGQWDTESLPPVDTPDALNKAAGRIRSLLRRMDHETVAYEDMQRNLHYAARVLEAVFIDESREGCNGNCKNLNCSRHSHGRDDQQQDNNNSNRSCSLQEASPGGAGAGVTPGADNQDSIESRTKGVSQAPQTHSGPTGPPSNTSSETIAQPAPKLQPALETVRESVMEESPSKDPGDKGPPPPASTSTLTSQTTTSSSATAEPSAKAAESQAGSAGSSGSCSNPAAVHRQRRLRTPTWARSMSTNKT</original>
    <variation>MYEPGTSSEEGVVSETEPEPAGVSVSVSVSVSEEPSASRSSRLTVITVVVVVVAVRAMSRLRRESSRQSVITVELIQFIIQYRAKETQEKKKR</variation>
    <location>
        <begin position="1"/>
        <end position="322"/>
    </location>
</feature>